<keyword id="KW-0002">3D-structure</keyword>
<keyword id="KW-0202">Cytokine</keyword>
<keyword id="KW-1015">Disulfide bond</keyword>
<keyword id="KW-0391">Immunity</keyword>
<keyword id="KW-1185">Reference proteome</keyword>
<keyword id="KW-0964">Secreted</keyword>
<keyword id="KW-0732">Signal</keyword>
<gene>
    <name evidence="9" type="primary">Diedel</name>
    <name evidence="6" type="synonym">die</name>
    <name evidence="9" type="ORF">CG11501</name>
</gene>
<sequence length="115" mass="12448">MASPVVSLLLVGICALAFVHVARSECCTSRELVEFKMDRGDCEAVRAIENYPNGCEVTICADGVAQLGAYCGQGSCNIFGCNCDGGCLSGDWSQEFVRRNQQYGIQIIKVTRLPF</sequence>
<reference evidence="10" key="1">
    <citation type="journal article" date="2000" name="Science">
        <title>The genome sequence of Drosophila melanogaster.</title>
        <authorList>
            <person name="Adams M.D."/>
            <person name="Celniker S.E."/>
            <person name="Holt R.A."/>
            <person name="Evans C.A."/>
            <person name="Gocayne J.D."/>
            <person name="Amanatides P.G."/>
            <person name="Scherer S.E."/>
            <person name="Li P.W."/>
            <person name="Hoskins R.A."/>
            <person name="Galle R.F."/>
            <person name="George R.A."/>
            <person name="Lewis S.E."/>
            <person name="Richards S."/>
            <person name="Ashburner M."/>
            <person name="Henderson S.N."/>
            <person name="Sutton G.G."/>
            <person name="Wortman J.R."/>
            <person name="Yandell M.D."/>
            <person name="Zhang Q."/>
            <person name="Chen L.X."/>
            <person name="Brandon R.C."/>
            <person name="Rogers Y.-H.C."/>
            <person name="Blazej R.G."/>
            <person name="Champe M."/>
            <person name="Pfeiffer B.D."/>
            <person name="Wan K.H."/>
            <person name="Doyle C."/>
            <person name="Baxter E.G."/>
            <person name="Helt G."/>
            <person name="Nelson C.R."/>
            <person name="Miklos G.L.G."/>
            <person name="Abril J.F."/>
            <person name="Agbayani A."/>
            <person name="An H.-J."/>
            <person name="Andrews-Pfannkoch C."/>
            <person name="Baldwin D."/>
            <person name="Ballew R.M."/>
            <person name="Basu A."/>
            <person name="Baxendale J."/>
            <person name="Bayraktaroglu L."/>
            <person name="Beasley E.M."/>
            <person name="Beeson K.Y."/>
            <person name="Benos P.V."/>
            <person name="Berman B.P."/>
            <person name="Bhandari D."/>
            <person name="Bolshakov S."/>
            <person name="Borkova D."/>
            <person name="Botchan M.R."/>
            <person name="Bouck J."/>
            <person name="Brokstein P."/>
            <person name="Brottier P."/>
            <person name="Burtis K.C."/>
            <person name="Busam D.A."/>
            <person name="Butler H."/>
            <person name="Cadieu E."/>
            <person name="Center A."/>
            <person name="Chandra I."/>
            <person name="Cherry J.M."/>
            <person name="Cawley S."/>
            <person name="Dahlke C."/>
            <person name="Davenport L.B."/>
            <person name="Davies P."/>
            <person name="de Pablos B."/>
            <person name="Delcher A."/>
            <person name="Deng Z."/>
            <person name="Mays A.D."/>
            <person name="Dew I."/>
            <person name="Dietz S.M."/>
            <person name="Dodson K."/>
            <person name="Doup L.E."/>
            <person name="Downes M."/>
            <person name="Dugan-Rocha S."/>
            <person name="Dunkov B.C."/>
            <person name="Dunn P."/>
            <person name="Durbin K.J."/>
            <person name="Evangelista C.C."/>
            <person name="Ferraz C."/>
            <person name="Ferriera S."/>
            <person name="Fleischmann W."/>
            <person name="Fosler C."/>
            <person name="Gabrielian A.E."/>
            <person name="Garg N.S."/>
            <person name="Gelbart W.M."/>
            <person name="Glasser K."/>
            <person name="Glodek A."/>
            <person name="Gong F."/>
            <person name="Gorrell J.H."/>
            <person name="Gu Z."/>
            <person name="Guan P."/>
            <person name="Harris M."/>
            <person name="Harris N.L."/>
            <person name="Harvey D.A."/>
            <person name="Heiman T.J."/>
            <person name="Hernandez J.R."/>
            <person name="Houck J."/>
            <person name="Hostin D."/>
            <person name="Houston K.A."/>
            <person name="Howland T.J."/>
            <person name="Wei M.-H."/>
            <person name="Ibegwam C."/>
            <person name="Jalali M."/>
            <person name="Kalush F."/>
            <person name="Karpen G.H."/>
            <person name="Ke Z."/>
            <person name="Kennison J.A."/>
            <person name="Ketchum K.A."/>
            <person name="Kimmel B.E."/>
            <person name="Kodira C.D."/>
            <person name="Kraft C.L."/>
            <person name="Kravitz S."/>
            <person name="Kulp D."/>
            <person name="Lai Z."/>
            <person name="Lasko P."/>
            <person name="Lei Y."/>
            <person name="Levitsky A.A."/>
            <person name="Li J.H."/>
            <person name="Li Z."/>
            <person name="Liang Y."/>
            <person name="Lin X."/>
            <person name="Liu X."/>
            <person name="Mattei B."/>
            <person name="McIntosh T.C."/>
            <person name="McLeod M.P."/>
            <person name="McPherson D."/>
            <person name="Merkulov G."/>
            <person name="Milshina N.V."/>
            <person name="Mobarry C."/>
            <person name="Morris J."/>
            <person name="Moshrefi A."/>
            <person name="Mount S.M."/>
            <person name="Moy M."/>
            <person name="Murphy B."/>
            <person name="Murphy L."/>
            <person name="Muzny D.M."/>
            <person name="Nelson D.L."/>
            <person name="Nelson D.R."/>
            <person name="Nelson K.A."/>
            <person name="Nixon K."/>
            <person name="Nusskern D.R."/>
            <person name="Pacleb J.M."/>
            <person name="Palazzolo M."/>
            <person name="Pittman G.S."/>
            <person name="Pan S."/>
            <person name="Pollard J."/>
            <person name="Puri V."/>
            <person name="Reese M.G."/>
            <person name="Reinert K."/>
            <person name="Remington K."/>
            <person name="Saunders R.D.C."/>
            <person name="Scheeler F."/>
            <person name="Shen H."/>
            <person name="Shue B.C."/>
            <person name="Siden-Kiamos I."/>
            <person name="Simpson M."/>
            <person name="Skupski M.P."/>
            <person name="Smith T.J."/>
            <person name="Spier E."/>
            <person name="Spradling A.C."/>
            <person name="Stapleton M."/>
            <person name="Strong R."/>
            <person name="Sun E."/>
            <person name="Svirskas R."/>
            <person name="Tector C."/>
            <person name="Turner R."/>
            <person name="Venter E."/>
            <person name="Wang A.H."/>
            <person name="Wang X."/>
            <person name="Wang Z.-Y."/>
            <person name="Wassarman D.A."/>
            <person name="Weinstock G.M."/>
            <person name="Weissenbach J."/>
            <person name="Williams S.M."/>
            <person name="Woodage T."/>
            <person name="Worley K.C."/>
            <person name="Wu D."/>
            <person name="Yang S."/>
            <person name="Yao Q.A."/>
            <person name="Ye J."/>
            <person name="Yeh R.-F."/>
            <person name="Zaveri J.S."/>
            <person name="Zhan M."/>
            <person name="Zhang G."/>
            <person name="Zhao Q."/>
            <person name="Zheng L."/>
            <person name="Zheng X.H."/>
            <person name="Zhong F.N."/>
            <person name="Zhong W."/>
            <person name="Zhou X."/>
            <person name="Zhu S.C."/>
            <person name="Zhu X."/>
            <person name="Smith H.O."/>
            <person name="Gibbs R.A."/>
            <person name="Myers E.W."/>
            <person name="Rubin G.M."/>
            <person name="Venter J.C."/>
        </authorList>
    </citation>
    <scope>NUCLEOTIDE SEQUENCE [LARGE SCALE GENOMIC DNA]</scope>
    <source>
        <strain evidence="10">Berkeley</strain>
    </source>
</reference>
<reference evidence="10" key="2">
    <citation type="journal article" date="2002" name="Genome Biol.">
        <title>Annotation of the Drosophila melanogaster euchromatic genome: a systematic review.</title>
        <authorList>
            <person name="Misra S."/>
            <person name="Crosby M.A."/>
            <person name="Mungall C.J."/>
            <person name="Matthews B.B."/>
            <person name="Campbell K.S."/>
            <person name="Hradecky P."/>
            <person name="Huang Y."/>
            <person name="Kaminker J.S."/>
            <person name="Millburn G.H."/>
            <person name="Prochnik S.E."/>
            <person name="Smith C.D."/>
            <person name="Tupy J.L."/>
            <person name="Whitfield E.J."/>
            <person name="Bayraktaroglu L."/>
            <person name="Berman B.P."/>
            <person name="Bettencourt B.R."/>
            <person name="Celniker S.E."/>
            <person name="de Grey A.D.N.J."/>
            <person name="Drysdale R.A."/>
            <person name="Harris N.L."/>
            <person name="Richter J."/>
            <person name="Russo S."/>
            <person name="Schroeder A.J."/>
            <person name="Shu S.Q."/>
            <person name="Stapleton M."/>
            <person name="Yamada C."/>
            <person name="Ashburner M."/>
            <person name="Gelbart W.M."/>
            <person name="Rubin G.M."/>
            <person name="Lewis S.E."/>
        </authorList>
    </citation>
    <scope>GENOME REANNOTATION</scope>
    <source>
        <strain evidence="10">Berkeley</strain>
    </source>
</reference>
<reference evidence="8" key="3">
    <citation type="journal article" date="2002" name="Genome Biol.">
        <title>A Drosophila full-length cDNA resource.</title>
        <authorList>
            <person name="Stapleton M."/>
            <person name="Carlson J.W."/>
            <person name="Brokstein P."/>
            <person name="Yu C."/>
            <person name="Champe M."/>
            <person name="George R.A."/>
            <person name="Guarin H."/>
            <person name="Kronmiller B."/>
            <person name="Pacleb J.M."/>
            <person name="Park S."/>
            <person name="Wan K.H."/>
            <person name="Rubin G.M."/>
            <person name="Celniker S.E."/>
        </authorList>
    </citation>
    <scope>NUCLEOTIDE SEQUENCE [LARGE SCALE MRNA]</scope>
    <source>
        <strain evidence="8">Berkeley</strain>
        <tissue evidence="8">Head</tissue>
    </source>
</reference>
<reference evidence="7" key="4">
    <citation type="journal article" date="2016" name="Proc. Natl. Acad. Sci. U.S.A.">
        <title>Cytokine Diedel and a viral homologue suppress the IMD pathway in Drosophila.</title>
        <authorList>
            <person name="Lamiable O."/>
            <person name="Kellenberger C."/>
            <person name="Kemp C."/>
            <person name="Troxler L."/>
            <person name="Pelte N."/>
            <person name="Boutros M."/>
            <person name="Marques J.T."/>
            <person name="Daeffler L."/>
            <person name="Hoffmann J.A."/>
            <person name="Roussel A."/>
            <person name="Imler J.L."/>
        </authorList>
    </citation>
    <scope>FUNCTION</scope>
    <scope>SUBCELLULAR LOCATION</scope>
    <scope>TISSUE SPECIFICITY</scope>
    <scope>INDUCTION BY VIRAL INFECTION</scope>
    <scope>DISRUPTION PHENOTYPE</scope>
</reference>
<reference key="5">
    <citation type="journal article" date="2018" name="PLoS Biol.">
        <title>A virus-acquired host cytokine controls systemic aging by antagonizing apoptosis.</title>
        <authorList>
            <person name="Mlih M."/>
            <person name="Khericha M."/>
            <person name="Birdwell C."/>
            <person name="West A.P."/>
            <person name="Karpac J."/>
        </authorList>
    </citation>
    <scope>FUNCTION</scope>
    <scope>SUBCELLULAR LOCATION</scope>
    <scope>DEVELOPMENTAL STAGE</scope>
    <scope>INDUCTION</scope>
    <scope>DISRUPTION PHENOTYPE</scope>
</reference>
<reference evidence="11 12" key="6">
    <citation type="journal article" date="2012" name="PLoS ONE">
        <title>Crystal structure of Diedel, a marker of the immune response of Drosophila melanogaster.</title>
        <authorList>
            <person name="Coste F."/>
            <person name="Kemp C."/>
            <person name="Bobezeau V."/>
            <person name="Hetru C."/>
            <person name="Kellenberger C."/>
            <person name="Imler J.L."/>
            <person name="Roussel A."/>
        </authorList>
    </citation>
    <scope>X-RAY CRYSTALLOGRAPHY (1.15 ANGSTROMS) OF 25-115</scope>
    <scope>SUBCELLULAR LOCATION</scope>
    <scope>DOMAIN</scope>
    <scope>DISULFIDE BONDS</scope>
</reference>
<proteinExistence type="evidence at protein level"/>
<evidence type="ECO:0000255" key="1"/>
<evidence type="ECO:0000269" key="2">
    <source>
    </source>
</evidence>
<evidence type="ECO:0000269" key="3">
    <source>
    </source>
</evidence>
<evidence type="ECO:0000269" key="4">
    <source>
    </source>
</evidence>
<evidence type="ECO:0000303" key="5">
    <source>
    </source>
</evidence>
<evidence type="ECO:0000303" key="6">
    <source>
    </source>
</evidence>
<evidence type="ECO:0000305" key="7"/>
<evidence type="ECO:0000312" key="8">
    <source>
        <dbReference type="EMBL" id="AAL48174.1"/>
    </source>
</evidence>
<evidence type="ECO:0000312" key="9">
    <source>
        <dbReference type="FlyBase" id="FBgn0039666"/>
    </source>
</evidence>
<evidence type="ECO:0000312" key="10">
    <source>
        <dbReference type="Proteomes" id="UP000000803"/>
    </source>
</evidence>
<evidence type="ECO:0007744" key="11">
    <source>
        <dbReference type="PDB" id="3ZZO"/>
    </source>
</evidence>
<evidence type="ECO:0007744" key="12">
    <source>
        <dbReference type="PDB" id="3ZZR"/>
    </source>
</evidence>
<evidence type="ECO:0007829" key="13">
    <source>
        <dbReference type="PDB" id="3ZZO"/>
    </source>
</evidence>
<organism evidence="10">
    <name type="scientific">Drosophila melanogaster</name>
    <name type="common">Fruit fly</name>
    <dbReference type="NCBI Taxonomy" id="7227"/>
    <lineage>
        <taxon>Eukaryota</taxon>
        <taxon>Metazoa</taxon>
        <taxon>Ecdysozoa</taxon>
        <taxon>Arthropoda</taxon>
        <taxon>Hexapoda</taxon>
        <taxon>Insecta</taxon>
        <taxon>Pterygota</taxon>
        <taxon>Neoptera</taxon>
        <taxon>Endopterygota</taxon>
        <taxon>Diptera</taxon>
        <taxon>Brachycera</taxon>
        <taxon>Muscomorpha</taxon>
        <taxon>Ephydroidea</taxon>
        <taxon>Drosophilidae</taxon>
        <taxon>Drosophila</taxon>
        <taxon>Sophophora</taxon>
    </lineage>
</organism>
<accession>Q9VAK8</accession>
<feature type="signal peptide" evidence="1">
    <location>
        <begin position="1"/>
        <end position="24"/>
    </location>
</feature>
<feature type="chain" id="PRO_5006752568" description="Protein Diedel">
    <location>
        <begin position="25"/>
        <end position="115"/>
    </location>
</feature>
<feature type="disulfide bond" evidence="11 12">
    <location>
        <begin position="26"/>
        <end position="81"/>
    </location>
</feature>
<feature type="disulfide bond" evidence="11 12">
    <location>
        <begin position="27"/>
        <end position="87"/>
    </location>
</feature>
<feature type="disulfide bond" evidence="11 12">
    <location>
        <begin position="42"/>
        <end position="55"/>
    </location>
</feature>
<feature type="disulfide bond" evidence="11 12">
    <location>
        <begin position="60"/>
        <end position="71"/>
    </location>
</feature>
<feature type="disulfide bond" evidence="11 12">
    <location>
        <begin position="76"/>
        <end position="83"/>
    </location>
</feature>
<feature type="strand" evidence="13">
    <location>
        <begin position="30"/>
        <end position="40"/>
    </location>
</feature>
<feature type="helix" evidence="13">
    <location>
        <begin position="42"/>
        <end position="45"/>
    </location>
</feature>
<feature type="strand" evidence="13">
    <location>
        <begin position="55"/>
        <end position="59"/>
    </location>
</feature>
<feature type="strand" evidence="13">
    <location>
        <begin position="63"/>
        <end position="65"/>
    </location>
</feature>
<feature type="strand" evidence="13">
    <location>
        <begin position="68"/>
        <end position="70"/>
    </location>
</feature>
<feature type="strand" evidence="13">
    <location>
        <begin position="72"/>
        <end position="74"/>
    </location>
</feature>
<feature type="strand" evidence="13">
    <location>
        <begin position="80"/>
        <end position="82"/>
    </location>
</feature>
<feature type="helix" evidence="13">
    <location>
        <begin position="93"/>
        <end position="99"/>
    </location>
</feature>
<feature type="helix" evidence="13">
    <location>
        <begin position="101"/>
        <end position="103"/>
    </location>
</feature>
<feature type="strand" evidence="13">
    <location>
        <begin position="105"/>
        <end position="114"/>
    </location>
</feature>
<comment type="function">
    <text evidence="3 4">Cytokine which promotes survival following infection by Sindbis virus by suppressing the immune deficiency pathway (PubMed:26739560). Following infection by the enteropathogenic bacteria E.carotovora limits intestinal stem cells proliferation (PubMed:30036358). When secreted from muscle or adipose tissue, can attenuate age-related intestinal tissue degeneration by inhibiting apoptosis (PubMed:30036358).</text>
</comment>
<comment type="subcellular location">
    <subcellularLocation>
        <location evidence="2 3 4">Secreted</location>
    </subcellularLocation>
    <text evidence="3">Secreted into the hemolymph.</text>
</comment>
<comment type="tissue specificity">
    <text evidence="3">Detected in hemolymph (at protein level). Also expressed in the fat body and is probably synthesized in the fat body and secreted into the hemolymph.</text>
</comment>
<comment type="developmental stage">
    <text evidence="4">Expressed in muscle and fat body with levels increasing in the adult stage.</text>
</comment>
<comment type="induction">
    <text evidence="3 4">By viral infection with Drosophila C virus (DCV), feline herpesvirus (FHV), Sindbis virus (SINV) and vesicular stomatitis virus (VSV). Strongest induction occurs with SINV and VSV. Highest levels of induction occur 6-24 hours after infection with levels declining steadily until 96 hours after infection. Induction requires the dorsal-related immunity factor Dif but does not require the myeloid differentiation primary response protein MyD88 (PubMed:26739560). By muscle tissue stress (PubMed:30036358).</text>
</comment>
<comment type="domain">
    <text evidence="2">Contains two subdomains, SD1 and SD2. SD1 is composed of an antiparallel beta-sheet covered by an alpha-helix and displays a ferredoxin-like fold. SD2 displays a new protein fold made of loops connected by four disulfide bridges.</text>
</comment>
<comment type="disruption phenotype">
    <text evidence="3 4">Mutants have a shortened lifespan and succumb more rapidly than controls to SINV infection (PubMed:26739560). RNAi-mediated knockdown in fat body leads to accelerated aging of the intestine with intestinal stem cell hyperproliferation, epithelial dysplasia and accelerated induction of apoptosis in the aging midgut (PubMed:30036358). RNAi-mediated knockdown in muscle had no impact on systemic intestinal tissue aging (PubMed:30036358).</text>
</comment>
<comment type="miscellaneous">
    <text evidence="5">The name 'Diedel' is the German translation of Tweedle and is based on the fictional Lewis Carroll characters Tweedledum and Tweedledee due to the presence of two subdomains within the protein.</text>
</comment>
<comment type="similarity">
    <text evidence="7">Belongs to the Diedel family.</text>
</comment>
<dbReference type="EMBL" id="AE014297">
    <property type="protein sequence ID" value="AAF56898.1"/>
    <property type="molecule type" value="Genomic_DNA"/>
</dbReference>
<dbReference type="EMBL" id="AY070703">
    <property type="protein sequence ID" value="AAL48174.1"/>
    <property type="molecule type" value="mRNA"/>
</dbReference>
<dbReference type="RefSeq" id="NP_651695.1">
    <property type="nucleotide sequence ID" value="NM_143438.3"/>
</dbReference>
<dbReference type="PDB" id="3ZZO">
    <property type="method" value="X-ray"/>
    <property type="resolution" value="1.15 A"/>
    <property type="chains" value="A=25-115"/>
</dbReference>
<dbReference type="PDB" id="3ZZR">
    <property type="method" value="X-ray"/>
    <property type="resolution" value="1.45 A"/>
    <property type="chains" value="A=25-115"/>
</dbReference>
<dbReference type="PDBsum" id="3ZZO"/>
<dbReference type="PDBsum" id="3ZZR"/>
<dbReference type="SMR" id="Q9VAK8"/>
<dbReference type="FunCoup" id="Q9VAK8">
    <property type="interactions" value="38"/>
</dbReference>
<dbReference type="STRING" id="7227.FBpp0084794"/>
<dbReference type="PaxDb" id="7227-FBpp0084794"/>
<dbReference type="DNASU" id="43474"/>
<dbReference type="EnsemblMetazoa" id="FBtr0085426">
    <property type="protein sequence ID" value="FBpp0084794"/>
    <property type="gene ID" value="FBgn0039666"/>
</dbReference>
<dbReference type="GeneID" id="43474"/>
<dbReference type="KEGG" id="dme:Dmel_CG11501"/>
<dbReference type="UCSC" id="CG11501-RA">
    <property type="organism name" value="d. melanogaster"/>
</dbReference>
<dbReference type="AGR" id="FB:FBgn0039666"/>
<dbReference type="CTD" id="43474"/>
<dbReference type="FlyBase" id="FBgn0039666">
    <property type="gene designation" value="Diedel"/>
</dbReference>
<dbReference type="VEuPathDB" id="VectorBase:FBgn0039666"/>
<dbReference type="eggNOG" id="ENOG502T9YA">
    <property type="taxonomic scope" value="Eukaryota"/>
</dbReference>
<dbReference type="GeneTree" id="ENSGT00540000073736"/>
<dbReference type="HOGENOM" id="CLU_152773_0_0_1"/>
<dbReference type="InParanoid" id="Q9VAK8"/>
<dbReference type="OMA" id="CCTSREL"/>
<dbReference type="OrthoDB" id="3737830at2759"/>
<dbReference type="PhylomeDB" id="Q9VAK8"/>
<dbReference type="BioGRID-ORCS" id="43474">
    <property type="hits" value="0 hits in 1 CRISPR screen"/>
</dbReference>
<dbReference type="EvolutionaryTrace" id="Q9VAK8"/>
<dbReference type="GenomeRNAi" id="43474"/>
<dbReference type="PRO" id="PR:Q9VAK8"/>
<dbReference type="Proteomes" id="UP000000803">
    <property type="component" value="Chromosome 3R"/>
</dbReference>
<dbReference type="Bgee" id="FBgn0039666">
    <property type="expression patterns" value="Expressed in head capsule and 8 other cell types or tissues"/>
</dbReference>
<dbReference type="ExpressionAtlas" id="Q9VAK8">
    <property type="expression patterns" value="baseline and differential"/>
</dbReference>
<dbReference type="GO" id="GO:0005615">
    <property type="term" value="C:extracellular space"/>
    <property type="evidence" value="ECO:0000314"/>
    <property type="project" value="UniProtKB"/>
</dbReference>
<dbReference type="GO" id="GO:0005125">
    <property type="term" value="F:cytokine activity"/>
    <property type="evidence" value="ECO:0000315"/>
    <property type="project" value="UniProtKB"/>
</dbReference>
<dbReference type="GO" id="GO:0051607">
    <property type="term" value="P:defense response to virus"/>
    <property type="evidence" value="ECO:0000315"/>
    <property type="project" value="UniProtKB"/>
</dbReference>
<dbReference type="GO" id="GO:0002376">
    <property type="term" value="P:immune system process"/>
    <property type="evidence" value="ECO:0007669"/>
    <property type="project" value="UniProtKB-KW"/>
</dbReference>
<dbReference type="GO" id="GO:0009617">
    <property type="term" value="P:response to bacterium"/>
    <property type="evidence" value="ECO:0000315"/>
    <property type="project" value="UniProtKB"/>
</dbReference>
<dbReference type="Gene3D" id="3.30.70.2800">
    <property type="match status" value="1"/>
</dbReference>
<dbReference type="InterPro" id="IPR025061">
    <property type="entry name" value="Diedel"/>
</dbReference>
<dbReference type="Pfam" id="PF13164">
    <property type="entry name" value="Diedel"/>
    <property type="match status" value="1"/>
</dbReference>
<protein>
    <recommendedName>
        <fullName evidence="5">Protein Diedel</fullName>
    </recommendedName>
</protein>
<name>DIE_DROME</name>